<dbReference type="EMBL" id="AY254332">
    <property type="protein sequence ID" value="AAQ01213.1"/>
    <property type="molecule type" value="mRNA"/>
</dbReference>
<dbReference type="SMR" id="Q6X5S8"/>
<dbReference type="MEROPS" id="I63.002"/>
<dbReference type="GO" id="GO:0005576">
    <property type="term" value="C:extracellular region"/>
    <property type="evidence" value="ECO:0007669"/>
    <property type="project" value="UniProtKB-SubCell"/>
</dbReference>
<dbReference type="GO" id="GO:0090729">
    <property type="term" value="F:toxin activity"/>
    <property type="evidence" value="ECO:0007669"/>
    <property type="project" value="UniProtKB-KW"/>
</dbReference>
<dbReference type="FunFam" id="3.10.100.10:FF:000087">
    <property type="entry name" value="Snaclec rhodocetin subunit delta"/>
    <property type="match status" value="1"/>
</dbReference>
<dbReference type="Gene3D" id="3.10.100.10">
    <property type="entry name" value="Mannose-Binding Protein A, subunit A"/>
    <property type="match status" value="1"/>
</dbReference>
<dbReference type="InterPro" id="IPR001304">
    <property type="entry name" value="C-type_lectin-like"/>
</dbReference>
<dbReference type="InterPro" id="IPR016186">
    <property type="entry name" value="C-type_lectin-like/link_sf"/>
</dbReference>
<dbReference type="InterPro" id="IPR050111">
    <property type="entry name" value="C-type_lectin/snaclec_domain"/>
</dbReference>
<dbReference type="InterPro" id="IPR018378">
    <property type="entry name" value="C-type_lectin_CS"/>
</dbReference>
<dbReference type="InterPro" id="IPR016187">
    <property type="entry name" value="CTDL_fold"/>
</dbReference>
<dbReference type="PANTHER" id="PTHR22803">
    <property type="entry name" value="MANNOSE, PHOSPHOLIPASE, LECTIN RECEPTOR RELATED"/>
    <property type="match status" value="1"/>
</dbReference>
<dbReference type="Pfam" id="PF00059">
    <property type="entry name" value="Lectin_C"/>
    <property type="match status" value="1"/>
</dbReference>
<dbReference type="PRINTS" id="PR01504">
    <property type="entry name" value="PNCREATITSAP"/>
</dbReference>
<dbReference type="SMART" id="SM00034">
    <property type="entry name" value="CLECT"/>
    <property type="match status" value="1"/>
</dbReference>
<dbReference type="SUPFAM" id="SSF56436">
    <property type="entry name" value="C-type lectin-like"/>
    <property type="match status" value="1"/>
</dbReference>
<dbReference type="PROSITE" id="PS00615">
    <property type="entry name" value="C_TYPE_LECTIN_1"/>
    <property type="match status" value="1"/>
</dbReference>
<dbReference type="PROSITE" id="PS50041">
    <property type="entry name" value="C_TYPE_LECTIN_2"/>
    <property type="match status" value="1"/>
</dbReference>
<reference key="1">
    <citation type="journal article" date="2003" name="Gene">
        <title>Novel sequences encoding venom C-type lectins are conserved in phylogenetically and geographically distinct Echis and Bitis viper species.</title>
        <authorList>
            <person name="Harrison R.A."/>
            <person name="Oliver J."/>
            <person name="Hasson S.S."/>
            <person name="Bharati K."/>
            <person name="Theakston R.D.G."/>
        </authorList>
    </citation>
    <scope>NUCLEOTIDE SEQUENCE [MRNA]</scope>
    <source>
        <tissue>Venom gland</tissue>
    </source>
</reference>
<accession>Q6X5S8</accession>
<sequence length="148" mass="16445">WGDSSSSASACWSCSSPLSGTEAGVCCPLGWSGYDQNCYKAFEELMNWADAEKFCTQQHKGSHLVSLHNIAEADFVVKKIVSVLKDGVIWMGLNDVWNECNWGWTDGAQLDYKAWNVESNCFIFKTAENHWSRTDCSGTHSFVCKSPA</sequence>
<evidence type="ECO:0000250" key="1"/>
<evidence type="ECO:0000255" key="2"/>
<evidence type="ECO:0000255" key="3">
    <source>
        <dbReference type="PROSITE-ProRule" id="PRU00040"/>
    </source>
</evidence>
<evidence type="ECO:0000305" key="4"/>
<organism>
    <name type="scientific">Echis carinatus sochureki</name>
    <name type="common">Saw-scaled viper</name>
    <dbReference type="NCBI Taxonomy" id="124223"/>
    <lineage>
        <taxon>Eukaryota</taxon>
        <taxon>Metazoa</taxon>
        <taxon>Chordata</taxon>
        <taxon>Craniata</taxon>
        <taxon>Vertebrata</taxon>
        <taxon>Euteleostomi</taxon>
        <taxon>Lepidosauria</taxon>
        <taxon>Squamata</taxon>
        <taxon>Bifurcata</taxon>
        <taxon>Unidentata</taxon>
        <taxon>Episquamata</taxon>
        <taxon>Toxicofera</taxon>
        <taxon>Serpentes</taxon>
        <taxon>Colubroidea</taxon>
        <taxon>Viperidae</taxon>
        <taxon>Viperinae</taxon>
        <taxon>Echis</taxon>
    </lineage>
</organism>
<comment type="function">
    <text evidence="1">Interferes with one step of hemostasis (modulation of platelet aggregation, or coagulation cascade, for example).</text>
</comment>
<comment type="subunit">
    <text evidence="1">Heterodimer; disulfide-linked.</text>
</comment>
<comment type="subcellular location">
    <subcellularLocation>
        <location evidence="1">Secreted</location>
    </subcellularLocation>
</comment>
<comment type="tissue specificity">
    <text>Expressed by the venom gland.</text>
</comment>
<comment type="miscellaneous">
    <text>Shows greater sequence similarity to the beta than alpha subunits compared to other heterodimer snaclecs.</text>
</comment>
<comment type="similarity">
    <text evidence="4">Belongs to the snaclec family.</text>
</comment>
<protein>
    <recommendedName>
        <fullName>Snaclec 3</fullName>
    </recommendedName>
    <alternativeName>
        <fullName>C-type lectin 3</fullName>
        <shortName>CTL-3</shortName>
    </alternativeName>
</protein>
<proteinExistence type="evidence at transcript level"/>
<keyword id="KW-1015">Disulfide bond</keyword>
<keyword id="KW-1199">Hemostasis impairing toxin</keyword>
<keyword id="KW-0964">Secreted</keyword>
<keyword id="KW-0732">Signal</keyword>
<keyword id="KW-0800">Toxin</keyword>
<feature type="signal peptide" evidence="2">
    <location>
        <begin position="1" status="less than"/>
        <end position="23"/>
    </location>
</feature>
<feature type="chain" id="PRO_0000355268" description="Snaclec 3">
    <location>
        <begin position="24"/>
        <end position="148"/>
    </location>
</feature>
<feature type="domain" description="C-type lectin" evidence="3">
    <location>
        <begin position="34"/>
        <end position="145"/>
    </location>
</feature>
<feature type="disulfide bond" evidence="3">
    <location>
        <begin position="27"/>
        <end position="38"/>
    </location>
</feature>
<feature type="disulfide bond" evidence="3">
    <location>
        <begin position="55"/>
        <end position="144"/>
    </location>
</feature>
<feature type="disulfide bond" description="Interchain" evidence="3">
    <location>
        <position position="100"/>
    </location>
</feature>
<feature type="disulfide bond" evidence="3">
    <location>
        <begin position="121"/>
        <end position="136"/>
    </location>
</feature>
<feature type="non-terminal residue">
    <location>
        <position position="1"/>
    </location>
</feature>
<name>SL3_ECHCS</name>